<sequence length="72" mass="8478">MAMNTVFLHLSEEAIKRLNKLRGWRKVSRSAILREAVEQYLERQQFPVRKAKGGRQRDEAVGVEELCKQHKE</sequence>
<name>YIIE_ECOL6</name>
<feature type="chain" id="PRO_0000293688" description="Uncharacterized protein YiiE">
    <location>
        <begin position="1"/>
        <end position="72"/>
    </location>
</feature>
<feature type="region of interest" description="Disordered" evidence="1">
    <location>
        <begin position="52"/>
        <end position="72"/>
    </location>
</feature>
<feature type="compositionally biased region" description="Basic and acidic residues" evidence="1">
    <location>
        <begin position="55"/>
        <end position="72"/>
    </location>
</feature>
<protein>
    <recommendedName>
        <fullName>Uncharacterized protein YiiE</fullName>
    </recommendedName>
</protein>
<organism>
    <name type="scientific">Escherichia coli O6:H1 (strain CFT073 / ATCC 700928 / UPEC)</name>
    <dbReference type="NCBI Taxonomy" id="199310"/>
    <lineage>
        <taxon>Bacteria</taxon>
        <taxon>Pseudomonadati</taxon>
        <taxon>Pseudomonadota</taxon>
        <taxon>Gammaproteobacteria</taxon>
        <taxon>Enterobacterales</taxon>
        <taxon>Enterobacteriaceae</taxon>
        <taxon>Escherichia</taxon>
    </lineage>
</organism>
<gene>
    <name type="primary">yiiE</name>
    <name type="ordered locus">c4840</name>
</gene>
<comment type="similarity">
    <text evidence="2">Belongs to the YiiE family.</text>
</comment>
<accession>Q8FBE9</accession>
<dbReference type="EMBL" id="AE014075">
    <property type="protein sequence ID" value="AAN83269.1"/>
    <property type="molecule type" value="Genomic_DNA"/>
</dbReference>
<dbReference type="RefSeq" id="WP_001314326.1">
    <property type="nucleotide sequence ID" value="NZ_CP051263.1"/>
</dbReference>
<dbReference type="SMR" id="Q8FBE9"/>
<dbReference type="KEGG" id="ecc:c4840"/>
<dbReference type="eggNOG" id="COG3905">
    <property type="taxonomic scope" value="Bacteria"/>
</dbReference>
<dbReference type="HOGENOM" id="CLU_182089_1_0_6"/>
<dbReference type="Proteomes" id="UP000001410">
    <property type="component" value="Chromosome"/>
</dbReference>
<dbReference type="GO" id="GO:0043565">
    <property type="term" value="F:sequence-specific DNA binding"/>
    <property type="evidence" value="ECO:0007669"/>
    <property type="project" value="UniProtKB-ARBA"/>
</dbReference>
<dbReference type="GO" id="GO:0006355">
    <property type="term" value="P:regulation of DNA-templated transcription"/>
    <property type="evidence" value="ECO:0007669"/>
    <property type="project" value="InterPro"/>
</dbReference>
<dbReference type="CDD" id="cd21631">
    <property type="entry name" value="RHH_CopG_NikR-like"/>
    <property type="match status" value="1"/>
</dbReference>
<dbReference type="Gene3D" id="1.10.1220.10">
    <property type="entry name" value="Met repressor-like"/>
    <property type="match status" value="1"/>
</dbReference>
<dbReference type="InterPro" id="IPR013321">
    <property type="entry name" value="Arc_rbn_hlx_hlx"/>
</dbReference>
<dbReference type="InterPro" id="IPR002145">
    <property type="entry name" value="CopG"/>
</dbReference>
<dbReference type="Pfam" id="PF01402">
    <property type="entry name" value="RHH_1"/>
    <property type="match status" value="1"/>
</dbReference>
<evidence type="ECO:0000256" key="1">
    <source>
        <dbReference type="SAM" id="MobiDB-lite"/>
    </source>
</evidence>
<evidence type="ECO:0000305" key="2"/>
<reference key="1">
    <citation type="journal article" date="2002" name="Proc. Natl. Acad. Sci. U.S.A.">
        <title>Extensive mosaic structure revealed by the complete genome sequence of uropathogenic Escherichia coli.</title>
        <authorList>
            <person name="Welch R.A."/>
            <person name="Burland V."/>
            <person name="Plunkett G. III"/>
            <person name="Redford P."/>
            <person name="Roesch P."/>
            <person name="Rasko D."/>
            <person name="Buckles E.L."/>
            <person name="Liou S.-R."/>
            <person name="Boutin A."/>
            <person name="Hackett J."/>
            <person name="Stroud D."/>
            <person name="Mayhew G.F."/>
            <person name="Rose D.J."/>
            <person name="Zhou S."/>
            <person name="Schwartz D.C."/>
            <person name="Perna N.T."/>
            <person name="Mobley H.L.T."/>
            <person name="Donnenberg M.S."/>
            <person name="Blattner F.R."/>
        </authorList>
    </citation>
    <scope>NUCLEOTIDE SEQUENCE [LARGE SCALE GENOMIC DNA]</scope>
    <source>
        <strain>CFT073 / ATCC 700928 / UPEC</strain>
    </source>
</reference>
<proteinExistence type="inferred from homology"/>
<keyword id="KW-1185">Reference proteome</keyword>